<feature type="chain" id="PRO_0000106910" description="Uncharacterized protein MJ0521">
    <location>
        <begin position="1"/>
        <end position="69"/>
    </location>
</feature>
<feature type="transmembrane region" description="Helical" evidence="1">
    <location>
        <begin position="15"/>
        <end position="35"/>
    </location>
</feature>
<feature type="transmembrane region" description="Helical" evidence="1">
    <location>
        <begin position="36"/>
        <end position="56"/>
    </location>
</feature>
<protein>
    <recommendedName>
        <fullName>Uncharacterized protein MJ0521</fullName>
    </recommendedName>
</protein>
<evidence type="ECO:0000255" key="1"/>
<evidence type="ECO:0000305" key="2"/>
<comment type="subcellular location">
    <subcellularLocation>
        <location evidence="2">Cell membrane</location>
        <topology evidence="2">Multi-pass membrane protein</topology>
    </subcellularLocation>
</comment>
<sequence>MKNMDEERKYGLYSLIIGLLCVIGIVMLNGLICYVLYIIAVPSLLYGIGAFIIPKTRRKDAGKLPFRGY</sequence>
<gene>
    <name type="ordered locus">MJ0521</name>
</gene>
<proteinExistence type="predicted"/>
<accession>Q57941</accession>
<name>Y521_METJA</name>
<reference key="1">
    <citation type="journal article" date="1996" name="Science">
        <title>Complete genome sequence of the methanogenic archaeon, Methanococcus jannaschii.</title>
        <authorList>
            <person name="Bult C.J."/>
            <person name="White O."/>
            <person name="Olsen G.J."/>
            <person name="Zhou L."/>
            <person name="Fleischmann R.D."/>
            <person name="Sutton G.G."/>
            <person name="Blake J.A."/>
            <person name="FitzGerald L.M."/>
            <person name="Clayton R.A."/>
            <person name="Gocayne J.D."/>
            <person name="Kerlavage A.R."/>
            <person name="Dougherty B.A."/>
            <person name="Tomb J.-F."/>
            <person name="Adams M.D."/>
            <person name="Reich C.I."/>
            <person name="Overbeek R."/>
            <person name="Kirkness E.F."/>
            <person name="Weinstock K.G."/>
            <person name="Merrick J.M."/>
            <person name="Glodek A."/>
            <person name="Scott J.L."/>
            <person name="Geoghagen N.S.M."/>
            <person name="Weidman J.F."/>
            <person name="Fuhrmann J.L."/>
            <person name="Nguyen D."/>
            <person name="Utterback T.R."/>
            <person name="Kelley J.M."/>
            <person name="Peterson J.D."/>
            <person name="Sadow P.W."/>
            <person name="Hanna M.C."/>
            <person name="Cotton M.D."/>
            <person name="Roberts K.M."/>
            <person name="Hurst M.A."/>
            <person name="Kaine B.P."/>
            <person name="Borodovsky M."/>
            <person name="Klenk H.-P."/>
            <person name="Fraser C.M."/>
            <person name="Smith H.O."/>
            <person name="Woese C.R."/>
            <person name="Venter J.C."/>
        </authorList>
    </citation>
    <scope>NUCLEOTIDE SEQUENCE [LARGE SCALE GENOMIC DNA]</scope>
    <source>
        <strain>ATCC 43067 / DSM 2661 / JAL-1 / JCM 10045 / NBRC 100440</strain>
    </source>
</reference>
<keyword id="KW-1003">Cell membrane</keyword>
<keyword id="KW-0472">Membrane</keyword>
<keyword id="KW-1185">Reference proteome</keyword>
<keyword id="KW-0812">Transmembrane</keyword>
<keyword id="KW-1133">Transmembrane helix</keyword>
<dbReference type="EMBL" id="L77117">
    <property type="protein sequence ID" value="AAB98528.1"/>
    <property type="molecule type" value="Genomic_DNA"/>
</dbReference>
<dbReference type="PIR" id="A64365">
    <property type="entry name" value="A64365"/>
</dbReference>
<dbReference type="SMR" id="Q57941"/>
<dbReference type="FunCoup" id="Q57941">
    <property type="interactions" value="1"/>
</dbReference>
<dbReference type="STRING" id="243232.MJ_0521"/>
<dbReference type="PaxDb" id="243232-MJ_0521"/>
<dbReference type="DNASU" id="1451385"/>
<dbReference type="EnsemblBacteria" id="AAB98528">
    <property type="protein sequence ID" value="AAB98528"/>
    <property type="gene ID" value="MJ_0521"/>
</dbReference>
<dbReference type="KEGG" id="mja:MJ_0521"/>
<dbReference type="eggNOG" id="arCOG05034">
    <property type="taxonomic scope" value="Archaea"/>
</dbReference>
<dbReference type="HOGENOM" id="CLU_2784017_0_0_2"/>
<dbReference type="InParanoid" id="Q57941"/>
<dbReference type="Proteomes" id="UP000000805">
    <property type="component" value="Chromosome"/>
</dbReference>
<dbReference type="GO" id="GO:0005886">
    <property type="term" value="C:plasma membrane"/>
    <property type="evidence" value="ECO:0007669"/>
    <property type="project" value="UniProtKB-SubCell"/>
</dbReference>
<organism>
    <name type="scientific">Methanocaldococcus jannaschii (strain ATCC 43067 / DSM 2661 / JAL-1 / JCM 10045 / NBRC 100440)</name>
    <name type="common">Methanococcus jannaschii</name>
    <dbReference type="NCBI Taxonomy" id="243232"/>
    <lineage>
        <taxon>Archaea</taxon>
        <taxon>Methanobacteriati</taxon>
        <taxon>Methanobacteriota</taxon>
        <taxon>Methanomada group</taxon>
        <taxon>Methanococci</taxon>
        <taxon>Methanococcales</taxon>
        <taxon>Methanocaldococcaceae</taxon>
        <taxon>Methanocaldococcus</taxon>
    </lineage>
</organism>